<proteinExistence type="inferred from homology"/>
<feature type="chain" id="PRO_0000139332" description="Proline--tRNA ligase">
    <location>
        <begin position="1"/>
        <end position="576"/>
    </location>
</feature>
<comment type="function">
    <text evidence="1">Catalyzes the attachment of proline to tRNA(Pro) in a two-step reaction: proline is first activated by ATP to form Pro-AMP and then transferred to the acceptor end of tRNA(Pro). As ProRS can inadvertently accommodate and process non-cognate amino acids such as alanine and cysteine, to avoid such errors it has two additional distinct editing activities against alanine. One activity is designated as 'pretransfer' editing and involves the tRNA(Pro)-independent hydrolysis of activated Ala-AMP. The other activity is designated 'posttransfer' editing and involves deacylation of mischarged Ala-tRNA(Pro). The misacylated Cys-tRNA(Pro) is not edited by ProRS.</text>
</comment>
<comment type="catalytic activity">
    <reaction evidence="1">
        <text>tRNA(Pro) + L-proline + ATP = L-prolyl-tRNA(Pro) + AMP + diphosphate</text>
        <dbReference type="Rhea" id="RHEA:14305"/>
        <dbReference type="Rhea" id="RHEA-COMP:9700"/>
        <dbReference type="Rhea" id="RHEA-COMP:9702"/>
        <dbReference type="ChEBI" id="CHEBI:30616"/>
        <dbReference type="ChEBI" id="CHEBI:33019"/>
        <dbReference type="ChEBI" id="CHEBI:60039"/>
        <dbReference type="ChEBI" id="CHEBI:78442"/>
        <dbReference type="ChEBI" id="CHEBI:78532"/>
        <dbReference type="ChEBI" id="CHEBI:456215"/>
        <dbReference type="EC" id="6.1.1.15"/>
    </reaction>
</comment>
<comment type="subunit">
    <text evidence="1">Homodimer.</text>
</comment>
<comment type="subcellular location">
    <subcellularLocation>
        <location evidence="1">Cytoplasm</location>
    </subcellularLocation>
</comment>
<comment type="domain">
    <text evidence="1">Consists of three domains: the N-terminal catalytic domain, the editing domain and the C-terminal anticodon-binding domain.</text>
</comment>
<comment type="similarity">
    <text evidence="1">Belongs to the class-II aminoacyl-tRNA synthetase family. ProS type 1 subfamily.</text>
</comment>
<protein>
    <recommendedName>
        <fullName evidence="1">Proline--tRNA ligase</fullName>
        <ecNumber evidence="1">6.1.1.15</ecNumber>
    </recommendedName>
    <alternativeName>
        <fullName evidence="1">Prolyl-tRNA synthetase</fullName>
        <shortName evidence="1">ProRS</shortName>
    </alternativeName>
</protein>
<keyword id="KW-0030">Aminoacyl-tRNA synthetase</keyword>
<keyword id="KW-0067">ATP-binding</keyword>
<keyword id="KW-0963">Cytoplasm</keyword>
<keyword id="KW-0436">Ligase</keyword>
<keyword id="KW-0547">Nucleotide-binding</keyword>
<keyword id="KW-0648">Protein biosynthesis</keyword>
<dbReference type="EC" id="6.1.1.15" evidence="1"/>
<dbReference type="EMBL" id="AE001439">
    <property type="protein sequence ID" value="AAD05795.1"/>
    <property type="molecule type" value="Genomic_DNA"/>
</dbReference>
<dbReference type="PIR" id="B71959">
    <property type="entry name" value="B71959"/>
</dbReference>
<dbReference type="RefSeq" id="WP_000899314.1">
    <property type="nucleotide sequence ID" value="NC_000921.1"/>
</dbReference>
<dbReference type="SMR" id="Q9ZMJ6"/>
<dbReference type="KEGG" id="hpj:jhp_0223"/>
<dbReference type="eggNOG" id="COG0442">
    <property type="taxonomic scope" value="Bacteria"/>
</dbReference>
<dbReference type="Proteomes" id="UP000000804">
    <property type="component" value="Chromosome"/>
</dbReference>
<dbReference type="GO" id="GO:0005829">
    <property type="term" value="C:cytosol"/>
    <property type="evidence" value="ECO:0007669"/>
    <property type="project" value="TreeGrafter"/>
</dbReference>
<dbReference type="GO" id="GO:0002161">
    <property type="term" value="F:aminoacyl-tRNA deacylase activity"/>
    <property type="evidence" value="ECO:0007669"/>
    <property type="project" value="InterPro"/>
</dbReference>
<dbReference type="GO" id="GO:0005524">
    <property type="term" value="F:ATP binding"/>
    <property type="evidence" value="ECO:0007669"/>
    <property type="project" value="UniProtKB-UniRule"/>
</dbReference>
<dbReference type="GO" id="GO:0004827">
    <property type="term" value="F:proline-tRNA ligase activity"/>
    <property type="evidence" value="ECO:0007669"/>
    <property type="project" value="UniProtKB-UniRule"/>
</dbReference>
<dbReference type="GO" id="GO:0006433">
    <property type="term" value="P:prolyl-tRNA aminoacylation"/>
    <property type="evidence" value="ECO:0007669"/>
    <property type="project" value="UniProtKB-UniRule"/>
</dbReference>
<dbReference type="CDD" id="cd04334">
    <property type="entry name" value="ProRS-INS"/>
    <property type="match status" value="1"/>
</dbReference>
<dbReference type="CDD" id="cd00861">
    <property type="entry name" value="ProRS_anticodon_short"/>
    <property type="match status" value="1"/>
</dbReference>
<dbReference type="CDD" id="cd00779">
    <property type="entry name" value="ProRS_core_prok"/>
    <property type="match status" value="1"/>
</dbReference>
<dbReference type="FunFam" id="3.30.930.10:FF:000065">
    <property type="entry name" value="Proline--tRNA ligase"/>
    <property type="match status" value="1"/>
</dbReference>
<dbReference type="FunFam" id="3.30.930.10:FF:000066">
    <property type="entry name" value="Proline--tRNA ligase"/>
    <property type="match status" value="1"/>
</dbReference>
<dbReference type="FunFam" id="3.40.50.800:FF:000051">
    <property type="entry name" value="Proline--tRNA ligase"/>
    <property type="match status" value="1"/>
</dbReference>
<dbReference type="Gene3D" id="3.40.50.800">
    <property type="entry name" value="Anticodon-binding domain"/>
    <property type="match status" value="1"/>
</dbReference>
<dbReference type="Gene3D" id="3.30.930.10">
    <property type="entry name" value="Bira Bifunctional Protein, Domain 2"/>
    <property type="match status" value="2"/>
</dbReference>
<dbReference type="HAMAP" id="MF_01569">
    <property type="entry name" value="Pro_tRNA_synth_type1"/>
    <property type="match status" value="1"/>
</dbReference>
<dbReference type="InterPro" id="IPR002314">
    <property type="entry name" value="aa-tRNA-synt_IIb"/>
</dbReference>
<dbReference type="InterPro" id="IPR006195">
    <property type="entry name" value="aa-tRNA-synth_II"/>
</dbReference>
<dbReference type="InterPro" id="IPR045864">
    <property type="entry name" value="aa-tRNA-synth_II/BPL/LPL"/>
</dbReference>
<dbReference type="InterPro" id="IPR004154">
    <property type="entry name" value="Anticodon-bd"/>
</dbReference>
<dbReference type="InterPro" id="IPR036621">
    <property type="entry name" value="Anticodon-bd_dom_sf"/>
</dbReference>
<dbReference type="InterPro" id="IPR002316">
    <property type="entry name" value="Pro-tRNA-ligase_IIa"/>
</dbReference>
<dbReference type="InterPro" id="IPR004500">
    <property type="entry name" value="Pro-tRNA-synth_IIa_bac-type"/>
</dbReference>
<dbReference type="InterPro" id="IPR023717">
    <property type="entry name" value="Pro-tRNA-Synthase_IIa_type1"/>
</dbReference>
<dbReference type="InterPro" id="IPR050062">
    <property type="entry name" value="Pro-tRNA_synthetase"/>
</dbReference>
<dbReference type="InterPro" id="IPR044140">
    <property type="entry name" value="ProRS_anticodon_short"/>
</dbReference>
<dbReference type="InterPro" id="IPR033730">
    <property type="entry name" value="ProRS_core_prok"/>
</dbReference>
<dbReference type="InterPro" id="IPR036754">
    <property type="entry name" value="YbaK/aa-tRNA-synt-asso_dom_sf"/>
</dbReference>
<dbReference type="InterPro" id="IPR007214">
    <property type="entry name" value="YbaK/aa-tRNA-synth-assoc-dom"/>
</dbReference>
<dbReference type="NCBIfam" id="NF006625">
    <property type="entry name" value="PRK09194.1"/>
    <property type="match status" value="1"/>
</dbReference>
<dbReference type="NCBIfam" id="TIGR00409">
    <property type="entry name" value="proS_fam_II"/>
    <property type="match status" value="1"/>
</dbReference>
<dbReference type="PANTHER" id="PTHR42753">
    <property type="entry name" value="MITOCHONDRIAL RIBOSOME PROTEIN L39/PROLYL-TRNA LIGASE FAMILY MEMBER"/>
    <property type="match status" value="1"/>
</dbReference>
<dbReference type="PANTHER" id="PTHR42753:SF2">
    <property type="entry name" value="PROLINE--TRNA LIGASE"/>
    <property type="match status" value="1"/>
</dbReference>
<dbReference type="Pfam" id="PF03129">
    <property type="entry name" value="HGTP_anticodon"/>
    <property type="match status" value="1"/>
</dbReference>
<dbReference type="Pfam" id="PF00587">
    <property type="entry name" value="tRNA-synt_2b"/>
    <property type="match status" value="2"/>
</dbReference>
<dbReference type="Pfam" id="PF04073">
    <property type="entry name" value="tRNA_edit"/>
    <property type="match status" value="1"/>
</dbReference>
<dbReference type="PRINTS" id="PR01046">
    <property type="entry name" value="TRNASYNTHPRO"/>
</dbReference>
<dbReference type="SUPFAM" id="SSF52954">
    <property type="entry name" value="Class II aaRS ABD-related"/>
    <property type="match status" value="1"/>
</dbReference>
<dbReference type="SUPFAM" id="SSF55681">
    <property type="entry name" value="Class II aaRS and biotin synthetases"/>
    <property type="match status" value="1"/>
</dbReference>
<dbReference type="SUPFAM" id="SSF55826">
    <property type="entry name" value="YbaK/ProRS associated domain"/>
    <property type="match status" value="1"/>
</dbReference>
<dbReference type="PROSITE" id="PS50862">
    <property type="entry name" value="AA_TRNA_LIGASE_II"/>
    <property type="match status" value="1"/>
</dbReference>
<reference key="1">
    <citation type="journal article" date="1999" name="Nature">
        <title>Genomic sequence comparison of two unrelated isolates of the human gastric pathogen Helicobacter pylori.</title>
        <authorList>
            <person name="Alm R.A."/>
            <person name="Ling L.-S.L."/>
            <person name="Moir D.T."/>
            <person name="King B.L."/>
            <person name="Brown E.D."/>
            <person name="Doig P.C."/>
            <person name="Smith D.R."/>
            <person name="Noonan B."/>
            <person name="Guild B.C."/>
            <person name="deJonge B.L."/>
            <person name="Carmel G."/>
            <person name="Tummino P.J."/>
            <person name="Caruso A."/>
            <person name="Uria-Nickelsen M."/>
            <person name="Mills D.M."/>
            <person name="Ives C."/>
            <person name="Gibson R."/>
            <person name="Merberg D."/>
            <person name="Mills S.D."/>
            <person name="Jiang Q."/>
            <person name="Taylor D.E."/>
            <person name="Vovis G.F."/>
            <person name="Trust T.J."/>
        </authorList>
    </citation>
    <scope>NUCLEOTIDE SEQUENCE [LARGE SCALE GENOMIC DNA]</scope>
    <source>
        <strain>J99 / ATCC 700824</strain>
    </source>
</reference>
<sequence>MLFSKLFAPTLKEPPKDAVLKSPKHPGKAGYIYQIGSGIYNFLPLAKKVLDKIENVTHKRMQEHGAQNILMSFVVLASLWEKSGRLDKYGKELLVFKDRKDNDFVLSPTLEENITEIAANFIKSYKQLPVHLYQIHTKFRDEIRPRFGLVRAREFIMKDGYSFHEDAESLDKEFLNTQSAYKEILSDLGLDFRIVEADSGAIGGSKSREFVVLTECGEDTIVVCQNCDYAANIEIAKRSKRTEPLMSPSALAKFPTPNTTSAPSVAEFFKTEPYFVLKALVNKVIHKDKETLACFFVRGDDNLEETKALNTLNLLGANALELREANEEDLNKAGLIAGFIGPYGLKKHVCYIIFDEDLKEGDCLIVGANEKDFHAVGVDLKGFENLVYADIVQVKESDCCPNCQGALKYHKSLEVGHIFKLGQSYAKSLKASFLDKNGKERFFEMGCYGIGISRLLSVILEQKSDDLGCVWTKNTAPFDVVIVVSNLKDEAQKKLAFEVYERLLQKGVDALLDDRDARFGAKMRDFELIGERLALIVGKQTLESKEFECIKRANLEKQTIKDIELEEKILEMLASE</sequence>
<name>SYP_HELPJ</name>
<gene>
    <name evidence="1" type="primary">proS</name>
    <name type="ordered locus">jhp_0223</name>
</gene>
<organism>
    <name type="scientific">Helicobacter pylori (strain J99 / ATCC 700824)</name>
    <name type="common">Campylobacter pylori J99</name>
    <dbReference type="NCBI Taxonomy" id="85963"/>
    <lineage>
        <taxon>Bacteria</taxon>
        <taxon>Pseudomonadati</taxon>
        <taxon>Campylobacterota</taxon>
        <taxon>Epsilonproteobacteria</taxon>
        <taxon>Campylobacterales</taxon>
        <taxon>Helicobacteraceae</taxon>
        <taxon>Helicobacter</taxon>
    </lineage>
</organism>
<evidence type="ECO:0000255" key="1">
    <source>
        <dbReference type="HAMAP-Rule" id="MF_01569"/>
    </source>
</evidence>
<accession>Q9ZMJ6</accession>